<gene>
    <name evidence="1" type="primary">ogt</name>
    <name type="ordered locus">AF_2314</name>
</gene>
<name>OGT_ARCFU</name>
<reference key="1">
    <citation type="journal article" date="1997" name="Nature">
        <title>The complete genome sequence of the hyperthermophilic, sulphate-reducing archaeon Archaeoglobus fulgidus.</title>
        <authorList>
            <person name="Klenk H.-P."/>
            <person name="Clayton R.A."/>
            <person name="Tomb J.-F."/>
            <person name="White O."/>
            <person name="Nelson K.E."/>
            <person name="Ketchum K.A."/>
            <person name="Dodson R.J."/>
            <person name="Gwinn M.L."/>
            <person name="Hickey E.K."/>
            <person name="Peterson J.D."/>
            <person name="Richardson D.L."/>
            <person name="Kerlavage A.R."/>
            <person name="Graham D.E."/>
            <person name="Kyrpides N.C."/>
            <person name="Fleischmann R.D."/>
            <person name="Quackenbush J."/>
            <person name="Lee N.H."/>
            <person name="Sutton G.G."/>
            <person name="Gill S.R."/>
            <person name="Kirkness E.F."/>
            <person name="Dougherty B.A."/>
            <person name="McKenney K."/>
            <person name="Adams M.D."/>
            <person name="Loftus B.J."/>
            <person name="Peterson S.N."/>
            <person name="Reich C.I."/>
            <person name="McNeil L.K."/>
            <person name="Badger J.H."/>
            <person name="Glodek A."/>
            <person name="Zhou L."/>
            <person name="Overbeek R."/>
            <person name="Gocayne J.D."/>
            <person name="Weidman J.F."/>
            <person name="McDonald L.A."/>
            <person name="Utterback T.R."/>
            <person name="Cotton M.D."/>
            <person name="Spriggs T."/>
            <person name="Artiach P."/>
            <person name="Kaine B.P."/>
            <person name="Sykes S.M."/>
            <person name="Sadow P.W."/>
            <person name="D'Andrea K.P."/>
            <person name="Bowman C."/>
            <person name="Fujii C."/>
            <person name="Garland S.A."/>
            <person name="Mason T.M."/>
            <person name="Olsen G.J."/>
            <person name="Fraser C.M."/>
            <person name="Smith H.O."/>
            <person name="Woese C.R."/>
            <person name="Venter J.C."/>
        </authorList>
    </citation>
    <scope>NUCLEOTIDE SEQUENCE [LARGE SCALE GENOMIC DNA]</scope>
    <source>
        <strain>ATCC 49558 / DSM 4304 / JCM 9628 / NBRC 100126 / VC-16</strain>
    </source>
</reference>
<comment type="function">
    <text evidence="1">Involved in the cellular defense against the biological effects of O6-methylguanine (O6-MeG) and O4-methylthymine (O4-MeT) in DNA. Repairs the methylated nucleobase in DNA by stoichiometrically transferring the methyl group to a cysteine residue in the enzyme. This is a suicide reaction: the enzyme is irreversibly inactivated.</text>
</comment>
<comment type="catalytic activity">
    <reaction evidence="1">
        <text>a 6-O-methyl-2'-deoxyguanosine in DNA + L-cysteinyl-[protein] = S-methyl-L-cysteinyl-[protein] + a 2'-deoxyguanosine in DNA</text>
        <dbReference type="Rhea" id="RHEA:24000"/>
        <dbReference type="Rhea" id="RHEA-COMP:10131"/>
        <dbReference type="Rhea" id="RHEA-COMP:10132"/>
        <dbReference type="Rhea" id="RHEA-COMP:11367"/>
        <dbReference type="Rhea" id="RHEA-COMP:11368"/>
        <dbReference type="ChEBI" id="CHEBI:29950"/>
        <dbReference type="ChEBI" id="CHEBI:82612"/>
        <dbReference type="ChEBI" id="CHEBI:85445"/>
        <dbReference type="ChEBI" id="CHEBI:85448"/>
        <dbReference type="EC" id="2.1.1.63"/>
    </reaction>
</comment>
<comment type="catalytic activity">
    <reaction evidence="1">
        <text>a 4-O-methyl-thymidine in DNA + L-cysteinyl-[protein] = a thymidine in DNA + S-methyl-L-cysteinyl-[protein]</text>
        <dbReference type="Rhea" id="RHEA:53428"/>
        <dbReference type="Rhea" id="RHEA-COMP:10131"/>
        <dbReference type="Rhea" id="RHEA-COMP:10132"/>
        <dbReference type="Rhea" id="RHEA-COMP:13555"/>
        <dbReference type="Rhea" id="RHEA-COMP:13556"/>
        <dbReference type="ChEBI" id="CHEBI:29950"/>
        <dbReference type="ChEBI" id="CHEBI:82612"/>
        <dbReference type="ChEBI" id="CHEBI:137386"/>
        <dbReference type="ChEBI" id="CHEBI:137387"/>
        <dbReference type="EC" id="2.1.1.63"/>
    </reaction>
</comment>
<comment type="subcellular location">
    <subcellularLocation>
        <location evidence="1">Cytoplasm</location>
    </subcellularLocation>
</comment>
<comment type="miscellaneous">
    <text>This enzyme catalyzes only one turnover and therefore is not strictly catalytic. According to one definition, an enzyme is a biocatalyst that acts repeatedly and over many reaction cycles.</text>
</comment>
<comment type="similarity">
    <text evidence="1">Belongs to the MGMT family.</text>
</comment>
<evidence type="ECO:0000255" key="1">
    <source>
        <dbReference type="HAMAP-Rule" id="MF_00772"/>
    </source>
</evidence>
<dbReference type="EC" id="2.1.1.63" evidence="1"/>
<dbReference type="EMBL" id="AE000782">
    <property type="protein sequence ID" value="AAB88942.1"/>
    <property type="molecule type" value="Genomic_DNA"/>
</dbReference>
<dbReference type="PIR" id="B69539">
    <property type="entry name" value="B69539"/>
</dbReference>
<dbReference type="SMR" id="O27970"/>
<dbReference type="STRING" id="224325.AF_2314"/>
<dbReference type="PaxDb" id="224325-AF_2314"/>
<dbReference type="EnsemblBacteria" id="AAB88942">
    <property type="protein sequence ID" value="AAB88942"/>
    <property type="gene ID" value="AF_2314"/>
</dbReference>
<dbReference type="KEGG" id="afu:AF_2314"/>
<dbReference type="eggNOG" id="arCOG02724">
    <property type="taxonomic scope" value="Archaea"/>
</dbReference>
<dbReference type="HOGENOM" id="CLU_000445_52_2_2"/>
<dbReference type="OrthoDB" id="372118at2157"/>
<dbReference type="PhylomeDB" id="O27970"/>
<dbReference type="BRENDA" id="2.1.1.63">
    <property type="organism ID" value="414"/>
</dbReference>
<dbReference type="Proteomes" id="UP000002199">
    <property type="component" value="Chromosome"/>
</dbReference>
<dbReference type="GO" id="GO:0005737">
    <property type="term" value="C:cytoplasm"/>
    <property type="evidence" value="ECO:0007669"/>
    <property type="project" value="UniProtKB-SubCell"/>
</dbReference>
<dbReference type="GO" id="GO:0003908">
    <property type="term" value="F:methylated-DNA-[protein]-cysteine S-methyltransferase activity"/>
    <property type="evidence" value="ECO:0007669"/>
    <property type="project" value="UniProtKB-UniRule"/>
</dbReference>
<dbReference type="GO" id="GO:0006307">
    <property type="term" value="P:DNA alkylation repair"/>
    <property type="evidence" value="ECO:0007669"/>
    <property type="project" value="UniProtKB-UniRule"/>
</dbReference>
<dbReference type="GO" id="GO:0032259">
    <property type="term" value="P:methylation"/>
    <property type="evidence" value="ECO:0007669"/>
    <property type="project" value="UniProtKB-KW"/>
</dbReference>
<dbReference type="CDD" id="cd06445">
    <property type="entry name" value="ATase"/>
    <property type="match status" value="1"/>
</dbReference>
<dbReference type="Gene3D" id="1.10.10.10">
    <property type="entry name" value="Winged helix-like DNA-binding domain superfamily/Winged helix DNA-binding domain"/>
    <property type="match status" value="1"/>
</dbReference>
<dbReference type="HAMAP" id="MF_00772">
    <property type="entry name" value="OGT"/>
    <property type="match status" value="1"/>
</dbReference>
<dbReference type="InterPro" id="IPR001497">
    <property type="entry name" value="MethylDNA_cys_MeTrfase_AS"/>
</dbReference>
<dbReference type="InterPro" id="IPR014048">
    <property type="entry name" value="MethylDNA_cys_MeTrfase_DNA-bd"/>
</dbReference>
<dbReference type="InterPro" id="IPR036217">
    <property type="entry name" value="MethylDNA_cys_MeTrfase_DNAb"/>
</dbReference>
<dbReference type="InterPro" id="IPR023546">
    <property type="entry name" value="MGMT"/>
</dbReference>
<dbReference type="InterPro" id="IPR036388">
    <property type="entry name" value="WH-like_DNA-bd_sf"/>
</dbReference>
<dbReference type="NCBIfam" id="TIGR00589">
    <property type="entry name" value="ogt"/>
    <property type="match status" value="1"/>
</dbReference>
<dbReference type="PANTHER" id="PTHR10815">
    <property type="entry name" value="METHYLATED-DNA--PROTEIN-CYSTEINE METHYLTRANSFERASE"/>
    <property type="match status" value="1"/>
</dbReference>
<dbReference type="PANTHER" id="PTHR10815:SF13">
    <property type="entry name" value="METHYLATED-DNA--PROTEIN-CYSTEINE METHYLTRANSFERASE"/>
    <property type="match status" value="1"/>
</dbReference>
<dbReference type="Pfam" id="PF01035">
    <property type="entry name" value="DNA_binding_1"/>
    <property type="match status" value="1"/>
</dbReference>
<dbReference type="SUPFAM" id="SSF46767">
    <property type="entry name" value="Methylated DNA-protein cysteine methyltransferase, C-terminal domain"/>
    <property type="match status" value="1"/>
</dbReference>
<dbReference type="PROSITE" id="PS00374">
    <property type="entry name" value="MGMT"/>
    <property type="match status" value="1"/>
</dbReference>
<sequence>MFSVKWGELYFNVVMEGGKAVKSYFSTYPSFSSSDSEYARQLERYFSGERVEVRIPYRLKASSFTRRVLEEVSRIPYGMVRMYSDIAKALNTSPRAVGQAVKRNPLPVIIPCHRVVGKKEIGGYTVSCSDIDGKSLKKRLLRLEGVF</sequence>
<organism>
    <name type="scientific">Archaeoglobus fulgidus (strain ATCC 49558 / DSM 4304 / JCM 9628 / NBRC 100126 / VC-16)</name>
    <dbReference type="NCBI Taxonomy" id="224325"/>
    <lineage>
        <taxon>Archaea</taxon>
        <taxon>Methanobacteriati</taxon>
        <taxon>Methanobacteriota</taxon>
        <taxon>Archaeoglobi</taxon>
        <taxon>Archaeoglobales</taxon>
        <taxon>Archaeoglobaceae</taxon>
        <taxon>Archaeoglobus</taxon>
    </lineage>
</organism>
<keyword id="KW-0963">Cytoplasm</keyword>
<keyword id="KW-0227">DNA damage</keyword>
<keyword id="KW-0234">DNA repair</keyword>
<keyword id="KW-0489">Methyltransferase</keyword>
<keyword id="KW-1185">Reference proteome</keyword>
<keyword id="KW-0808">Transferase</keyword>
<proteinExistence type="inferred from homology"/>
<feature type="chain" id="PRO_0000139375" description="Methylated-DNA--protein-cysteine methyltransferase">
    <location>
        <begin position="1"/>
        <end position="147"/>
    </location>
</feature>
<feature type="active site" description="Nucleophile; methyl group acceptor" evidence="1">
    <location>
        <position position="112"/>
    </location>
</feature>
<protein>
    <recommendedName>
        <fullName evidence="1">Methylated-DNA--protein-cysteine methyltransferase</fullName>
        <ecNumber evidence="1">2.1.1.63</ecNumber>
    </recommendedName>
    <alternativeName>
        <fullName evidence="1">6-O-methylguanine-DNA methyltransferase</fullName>
        <shortName evidence="1">MGMT</shortName>
    </alternativeName>
    <alternativeName>
        <fullName evidence="1">O-6-methylguanine-DNA-alkyltransferase</fullName>
    </alternativeName>
</protein>
<accession>O27970</accession>